<gene>
    <name evidence="1" type="primary">rpsF</name>
    <name type="ordered locus">RHA1_ro03432</name>
</gene>
<feature type="chain" id="PRO_1000005335" description="Small ribosomal subunit protein bS6">
    <location>
        <begin position="1"/>
        <end position="95"/>
    </location>
</feature>
<protein>
    <recommendedName>
        <fullName evidence="1">Small ribosomal subunit protein bS6</fullName>
    </recommendedName>
    <alternativeName>
        <fullName evidence="2">30S ribosomal protein S6</fullName>
    </alternativeName>
</protein>
<evidence type="ECO:0000255" key="1">
    <source>
        <dbReference type="HAMAP-Rule" id="MF_00360"/>
    </source>
</evidence>
<evidence type="ECO:0000305" key="2"/>
<reference key="1">
    <citation type="journal article" date="2006" name="Proc. Natl. Acad. Sci. U.S.A.">
        <title>The complete genome of Rhodococcus sp. RHA1 provides insights into a catabolic powerhouse.</title>
        <authorList>
            <person name="McLeod M.P."/>
            <person name="Warren R.L."/>
            <person name="Hsiao W.W.L."/>
            <person name="Araki N."/>
            <person name="Myhre M."/>
            <person name="Fernandes C."/>
            <person name="Miyazawa D."/>
            <person name="Wong W."/>
            <person name="Lillquist A.L."/>
            <person name="Wang D."/>
            <person name="Dosanjh M."/>
            <person name="Hara H."/>
            <person name="Petrescu A."/>
            <person name="Morin R.D."/>
            <person name="Yang G."/>
            <person name="Stott J.M."/>
            <person name="Schein J.E."/>
            <person name="Shin H."/>
            <person name="Smailus D."/>
            <person name="Siddiqui A.S."/>
            <person name="Marra M.A."/>
            <person name="Jones S.J.M."/>
            <person name="Holt R."/>
            <person name="Brinkman F.S.L."/>
            <person name="Miyauchi K."/>
            <person name="Fukuda M."/>
            <person name="Davies J.E."/>
            <person name="Mohn W.W."/>
            <person name="Eltis L.D."/>
        </authorList>
    </citation>
    <scope>NUCLEOTIDE SEQUENCE [LARGE SCALE GENOMIC DNA]</scope>
    <source>
        <strain>RHA1</strain>
    </source>
</reference>
<dbReference type="EMBL" id="CP000431">
    <property type="protein sequence ID" value="ABG95235.1"/>
    <property type="molecule type" value="Genomic_DNA"/>
</dbReference>
<dbReference type="RefSeq" id="WP_005249677.1">
    <property type="nucleotide sequence ID" value="NC_008268.1"/>
</dbReference>
<dbReference type="SMR" id="Q0SB51"/>
<dbReference type="GeneID" id="69895223"/>
<dbReference type="KEGG" id="rha:RHA1_ro03432"/>
<dbReference type="eggNOG" id="COG0360">
    <property type="taxonomic scope" value="Bacteria"/>
</dbReference>
<dbReference type="HOGENOM" id="CLU_113441_5_3_11"/>
<dbReference type="OrthoDB" id="9812702at2"/>
<dbReference type="Proteomes" id="UP000008710">
    <property type="component" value="Chromosome"/>
</dbReference>
<dbReference type="GO" id="GO:0005737">
    <property type="term" value="C:cytoplasm"/>
    <property type="evidence" value="ECO:0007669"/>
    <property type="project" value="UniProtKB-ARBA"/>
</dbReference>
<dbReference type="GO" id="GO:1990904">
    <property type="term" value="C:ribonucleoprotein complex"/>
    <property type="evidence" value="ECO:0007669"/>
    <property type="project" value="UniProtKB-KW"/>
</dbReference>
<dbReference type="GO" id="GO:0005840">
    <property type="term" value="C:ribosome"/>
    <property type="evidence" value="ECO:0007669"/>
    <property type="project" value="UniProtKB-KW"/>
</dbReference>
<dbReference type="GO" id="GO:0070181">
    <property type="term" value="F:small ribosomal subunit rRNA binding"/>
    <property type="evidence" value="ECO:0007669"/>
    <property type="project" value="TreeGrafter"/>
</dbReference>
<dbReference type="GO" id="GO:0003735">
    <property type="term" value="F:structural constituent of ribosome"/>
    <property type="evidence" value="ECO:0007669"/>
    <property type="project" value="InterPro"/>
</dbReference>
<dbReference type="GO" id="GO:0006412">
    <property type="term" value="P:translation"/>
    <property type="evidence" value="ECO:0007669"/>
    <property type="project" value="UniProtKB-UniRule"/>
</dbReference>
<dbReference type="CDD" id="cd00473">
    <property type="entry name" value="bS6"/>
    <property type="match status" value="1"/>
</dbReference>
<dbReference type="FunFam" id="3.30.70.60:FF:000002">
    <property type="entry name" value="30S ribosomal protein S6"/>
    <property type="match status" value="1"/>
</dbReference>
<dbReference type="Gene3D" id="3.30.70.60">
    <property type="match status" value="1"/>
</dbReference>
<dbReference type="HAMAP" id="MF_00360">
    <property type="entry name" value="Ribosomal_bS6"/>
    <property type="match status" value="1"/>
</dbReference>
<dbReference type="InterPro" id="IPR000529">
    <property type="entry name" value="Ribosomal_bS6"/>
</dbReference>
<dbReference type="InterPro" id="IPR035980">
    <property type="entry name" value="Ribosomal_bS6_sf"/>
</dbReference>
<dbReference type="InterPro" id="IPR020814">
    <property type="entry name" value="Ribosomal_S6_plastid/chlpt"/>
</dbReference>
<dbReference type="InterPro" id="IPR014717">
    <property type="entry name" value="Transl_elong_EF1B/ribsomal_bS6"/>
</dbReference>
<dbReference type="NCBIfam" id="TIGR00166">
    <property type="entry name" value="S6"/>
    <property type="match status" value="1"/>
</dbReference>
<dbReference type="PANTHER" id="PTHR21011">
    <property type="entry name" value="MITOCHONDRIAL 28S RIBOSOMAL PROTEIN S6"/>
    <property type="match status" value="1"/>
</dbReference>
<dbReference type="PANTHER" id="PTHR21011:SF1">
    <property type="entry name" value="SMALL RIBOSOMAL SUBUNIT PROTEIN BS6M"/>
    <property type="match status" value="1"/>
</dbReference>
<dbReference type="Pfam" id="PF01250">
    <property type="entry name" value="Ribosomal_S6"/>
    <property type="match status" value="1"/>
</dbReference>
<dbReference type="SUPFAM" id="SSF54995">
    <property type="entry name" value="Ribosomal protein S6"/>
    <property type="match status" value="1"/>
</dbReference>
<comment type="function">
    <text evidence="1">Binds together with bS18 to 16S ribosomal RNA.</text>
</comment>
<comment type="similarity">
    <text evidence="1">Belongs to the bacterial ribosomal protein bS6 family.</text>
</comment>
<keyword id="KW-0687">Ribonucleoprotein</keyword>
<keyword id="KW-0689">Ribosomal protein</keyword>
<keyword id="KW-0694">RNA-binding</keyword>
<keyword id="KW-0699">rRNA-binding</keyword>
<name>RS6_RHOJR</name>
<organism>
    <name type="scientific">Rhodococcus jostii (strain RHA1)</name>
    <dbReference type="NCBI Taxonomy" id="101510"/>
    <lineage>
        <taxon>Bacteria</taxon>
        <taxon>Bacillati</taxon>
        <taxon>Actinomycetota</taxon>
        <taxon>Actinomycetes</taxon>
        <taxon>Mycobacteriales</taxon>
        <taxon>Nocardiaceae</taxon>
        <taxon>Rhodococcus</taxon>
    </lineage>
</organism>
<proteinExistence type="inferred from homology"/>
<accession>Q0SB51</accession>
<sequence length="95" mass="10799">MRHYELMVILDPSLDERTVAPSLDTFLNVVRQDGGKIDKVDVWGKRRLAYEILKHSEGIYAVIDISATPATVAELDRQLGLNESVLRTKVLRHNK</sequence>